<proteinExistence type="evidence at protein level"/>
<dbReference type="EMBL" id="BC097371">
    <property type="protein sequence ID" value="AAH97371.1"/>
    <property type="molecule type" value="mRNA"/>
</dbReference>
<dbReference type="RefSeq" id="NP_001019953.1">
    <property type="nucleotide sequence ID" value="NM_001024782.1"/>
</dbReference>
<dbReference type="RefSeq" id="XP_017447329.1">
    <property type="nucleotide sequence ID" value="XM_017591840.3"/>
</dbReference>
<dbReference type="RefSeq" id="XP_017447330.1">
    <property type="nucleotide sequence ID" value="XM_017591841.3"/>
</dbReference>
<dbReference type="RefSeq" id="XP_017447331.1">
    <property type="nucleotide sequence ID" value="XM_017591842.3"/>
</dbReference>
<dbReference type="RefSeq" id="XP_017447332.1">
    <property type="nucleotide sequence ID" value="XM_017591843.1"/>
</dbReference>
<dbReference type="RefSeq" id="XP_038961161.1">
    <property type="nucleotide sequence ID" value="XM_039105233.2"/>
</dbReference>
<dbReference type="RefSeq" id="XP_038961162.1">
    <property type="nucleotide sequence ID" value="XM_039105234.2"/>
</dbReference>
<dbReference type="RefSeq" id="XP_063140012.1">
    <property type="nucleotide sequence ID" value="XM_063283942.1"/>
</dbReference>
<dbReference type="RefSeq" id="XP_063140014.1">
    <property type="nucleotide sequence ID" value="XM_063283944.1"/>
</dbReference>
<dbReference type="RefSeq" id="XP_063140015.1">
    <property type="nucleotide sequence ID" value="XM_063283945.1"/>
</dbReference>
<dbReference type="RefSeq" id="XP_063140016.1">
    <property type="nucleotide sequence ID" value="XM_063283946.1"/>
</dbReference>
<dbReference type="SMR" id="Q4V8I7"/>
<dbReference type="FunCoup" id="Q4V8I7">
    <property type="interactions" value="1773"/>
</dbReference>
<dbReference type="STRING" id="10116.ENSRNOP00000031726"/>
<dbReference type="GlyCosmos" id="Q4V8I7">
    <property type="glycosylation" value="2 sites, No reported glycans"/>
</dbReference>
<dbReference type="GlyGen" id="Q4V8I7">
    <property type="glycosylation" value="3 sites"/>
</dbReference>
<dbReference type="iPTMnet" id="Q4V8I7"/>
<dbReference type="PhosphoSitePlus" id="Q4V8I7"/>
<dbReference type="jPOST" id="Q4V8I7"/>
<dbReference type="PaxDb" id="10116-ENSRNOP00000031726"/>
<dbReference type="Ensembl" id="ENSRNOT00000033934.6">
    <property type="protein sequence ID" value="ENSRNOP00000031726.4"/>
    <property type="gene ID" value="ENSRNOG00000025296.6"/>
</dbReference>
<dbReference type="GeneID" id="311846"/>
<dbReference type="KEGG" id="rno:311846"/>
<dbReference type="UCSC" id="RGD:1311690">
    <property type="organism name" value="rat"/>
</dbReference>
<dbReference type="AGR" id="RGD:1311690"/>
<dbReference type="CTD" id="56262"/>
<dbReference type="RGD" id="1311690">
    <property type="gene designation" value="Lrrc8a"/>
</dbReference>
<dbReference type="eggNOG" id="KOG0619">
    <property type="taxonomic scope" value="Eukaryota"/>
</dbReference>
<dbReference type="GeneTree" id="ENSGT00940000154043"/>
<dbReference type="HOGENOM" id="CLU_019019_0_0_1"/>
<dbReference type="InParanoid" id="Q4V8I7"/>
<dbReference type="OMA" id="HNVQEID"/>
<dbReference type="OrthoDB" id="660555at2759"/>
<dbReference type="PhylomeDB" id="Q4V8I7"/>
<dbReference type="TreeFam" id="TF331443"/>
<dbReference type="Reactome" id="R-RNO-5223345">
    <property type="pathway name" value="Miscellaneous transport and binding events"/>
</dbReference>
<dbReference type="PRO" id="PR:Q4V8I7"/>
<dbReference type="Proteomes" id="UP000002494">
    <property type="component" value="Chromosome 3"/>
</dbReference>
<dbReference type="Bgee" id="ENSRNOG00000025296">
    <property type="expression patterns" value="Expressed in heart and 19 other cell types or tissues"/>
</dbReference>
<dbReference type="GO" id="GO:0009986">
    <property type="term" value="C:cell surface"/>
    <property type="evidence" value="ECO:0000266"/>
    <property type="project" value="RGD"/>
</dbReference>
<dbReference type="GO" id="GO:0005737">
    <property type="term" value="C:cytoplasm"/>
    <property type="evidence" value="ECO:0000318"/>
    <property type="project" value="GO_Central"/>
</dbReference>
<dbReference type="GO" id="GO:0005765">
    <property type="term" value="C:lysosomal membrane"/>
    <property type="evidence" value="ECO:0000250"/>
    <property type="project" value="UniProtKB"/>
</dbReference>
<dbReference type="GO" id="GO:0016020">
    <property type="term" value="C:membrane"/>
    <property type="evidence" value="ECO:0000250"/>
    <property type="project" value="UniProtKB"/>
</dbReference>
<dbReference type="GO" id="GO:0034702">
    <property type="term" value="C:monoatomic ion channel complex"/>
    <property type="evidence" value="ECO:0000250"/>
    <property type="project" value="UniProtKB"/>
</dbReference>
<dbReference type="GO" id="GO:0005886">
    <property type="term" value="C:plasma membrane"/>
    <property type="evidence" value="ECO:0000250"/>
    <property type="project" value="UniProtKB"/>
</dbReference>
<dbReference type="GO" id="GO:0140360">
    <property type="term" value="F:cyclic-GMP-AMP transmembrane transporter activity"/>
    <property type="evidence" value="ECO:0000250"/>
    <property type="project" value="UniProtKB"/>
</dbReference>
<dbReference type="GO" id="GO:0042802">
    <property type="term" value="F:identical protein binding"/>
    <property type="evidence" value="ECO:0000266"/>
    <property type="project" value="RGD"/>
</dbReference>
<dbReference type="GO" id="GO:0005225">
    <property type="term" value="F:volume-sensitive anion channel activity"/>
    <property type="evidence" value="ECO:0000315"/>
    <property type="project" value="UniProtKB"/>
</dbReference>
<dbReference type="GO" id="GO:0015810">
    <property type="term" value="P:aspartate transmembrane transport"/>
    <property type="evidence" value="ECO:0000315"/>
    <property type="project" value="UniProtKB"/>
</dbReference>
<dbReference type="GO" id="GO:0006884">
    <property type="term" value="P:cell volume homeostasis"/>
    <property type="evidence" value="ECO:0000250"/>
    <property type="project" value="UniProtKB"/>
</dbReference>
<dbReference type="GO" id="GO:1902476">
    <property type="term" value="P:chloride transmembrane transport"/>
    <property type="evidence" value="ECO:0000250"/>
    <property type="project" value="UniProtKB"/>
</dbReference>
<dbReference type="GO" id="GO:0140361">
    <property type="term" value="P:cyclic-GMP-AMP transmembrane import across plasma membrane"/>
    <property type="evidence" value="ECO:0000250"/>
    <property type="project" value="UniProtKB"/>
</dbReference>
<dbReference type="GO" id="GO:0001678">
    <property type="term" value="P:intracellular glucose homeostasis"/>
    <property type="evidence" value="ECO:0000250"/>
    <property type="project" value="UniProtKB"/>
</dbReference>
<dbReference type="GO" id="GO:0035556">
    <property type="term" value="P:intracellular signal transduction"/>
    <property type="evidence" value="ECO:0000318"/>
    <property type="project" value="GO_Central"/>
</dbReference>
<dbReference type="GO" id="GO:0098656">
    <property type="term" value="P:monoatomic anion transmembrane transport"/>
    <property type="evidence" value="ECO:0000250"/>
    <property type="project" value="UniProtKB"/>
</dbReference>
<dbReference type="GO" id="GO:0006820">
    <property type="term" value="P:monoatomic anion transport"/>
    <property type="evidence" value="ECO:0000250"/>
    <property type="project" value="UniProtKB"/>
</dbReference>
<dbReference type="GO" id="GO:0032024">
    <property type="term" value="P:positive regulation of insulin secretion"/>
    <property type="evidence" value="ECO:0000250"/>
    <property type="project" value="UniProtKB"/>
</dbReference>
<dbReference type="GO" id="GO:0045663">
    <property type="term" value="P:positive regulation of myoblast differentiation"/>
    <property type="evidence" value="ECO:0000250"/>
    <property type="project" value="UniProtKB"/>
</dbReference>
<dbReference type="GO" id="GO:0002329">
    <property type="term" value="P:pre-B cell differentiation"/>
    <property type="evidence" value="ECO:0000250"/>
    <property type="project" value="UniProtKB"/>
</dbReference>
<dbReference type="GO" id="GO:0034214">
    <property type="term" value="P:protein hexamerization"/>
    <property type="evidence" value="ECO:0000250"/>
    <property type="project" value="UniProtKB"/>
</dbReference>
<dbReference type="GO" id="GO:0006970">
    <property type="term" value="P:response to osmotic stress"/>
    <property type="evidence" value="ECO:0000315"/>
    <property type="project" value="UniProtKB"/>
</dbReference>
<dbReference type="GO" id="GO:0007283">
    <property type="term" value="P:spermatogenesis"/>
    <property type="evidence" value="ECO:0000250"/>
    <property type="project" value="UniProtKB"/>
</dbReference>
<dbReference type="GO" id="GO:0015734">
    <property type="term" value="P:taurine transmembrane transport"/>
    <property type="evidence" value="ECO:0000315"/>
    <property type="project" value="UniProtKB"/>
</dbReference>
<dbReference type="FunFam" id="3.80.10.10:FF:000223">
    <property type="entry name" value="Leucine-rich repeat-containing 8 VRAC subunit A"/>
    <property type="match status" value="1"/>
</dbReference>
<dbReference type="FunFam" id="3.80.10.10:FF:000871">
    <property type="entry name" value="volume-regulated anion channel subunit LRRC8A"/>
    <property type="match status" value="1"/>
</dbReference>
<dbReference type="Gene3D" id="3.80.10.10">
    <property type="entry name" value="Ribonuclease Inhibitor"/>
    <property type="match status" value="2"/>
</dbReference>
<dbReference type="InterPro" id="IPR001611">
    <property type="entry name" value="Leu-rich_rpt"/>
</dbReference>
<dbReference type="InterPro" id="IPR003591">
    <property type="entry name" value="Leu-rich_rpt_typical-subtyp"/>
</dbReference>
<dbReference type="InterPro" id="IPR032675">
    <property type="entry name" value="LRR_dom_sf"/>
</dbReference>
<dbReference type="InterPro" id="IPR050216">
    <property type="entry name" value="LRR_domain-containing"/>
</dbReference>
<dbReference type="InterPro" id="IPR055414">
    <property type="entry name" value="LRR_R13L4/SHOC2-like"/>
</dbReference>
<dbReference type="InterPro" id="IPR021040">
    <property type="entry name" value="LRRC8_Pannexin-like"/>
</dbReference>
<dbReference type="PANTHER" id="PTHR48051">
    <property type="match status" value="1"/>
</dbReference>
<dbReference type="PANTHER" id="PTHR48051:SF1">
    <property type="entry name" value="RAS SUPPRESSOR PROTEIN 1"/>
    <property type="match status" value="1"/>
</dbReference>
<dbReference type="Pfam" id="PF23598">
    <property type="entry name" value="LRR_14"/>
    <property type="match status" value="1"/>
</dbReference>
<dbReference type="Pfam" id="PF13855">
    <property type="entry name" value="LRR_8"/>
    <property type="match status" value="1"/>
</dbReference>
<dbReference type="Pfam" id="PF12534">
    <property type="entry name" value="Pannexin_like"/>
    <property type="match status" value="1"/>
</dbReference>
<dbReference type="SMART" id="SM00365">
    <property type="entry name" value="LRR_SD22"/>
    <property type="match status" value="3"/>
</dbReference>
<dbReference type="SMART" id="SM00369">
    <property type="entry name" value="LRR_TYP"/>
    <property type="match status" value="8"/>
</dbReference>
<dbReference type="SUPFAM" id="SSF52058">
    <property type="entry name" value="L domain-like"/>
    <property type="match status" value="1"/>
</dbReference>
<dbReference type="PROSITE" id="PS51450">
    <property type="entry name" value="LRR"/>
    <property type="match status" value="11"/>
</dbReference>
<feature type="chain" id="PRO_0000084501" description="Volume-regulated anion channel subunit LRRC8A">
    <location>
        <begin position="1"/>
        <end position="810"/>
    </location>
</feature>
<feature type="topological domain" description="Cytoplasmic" evidence="1">
    <location>
        <begin position="1"/>
        <end position="22"/>
    </location>
</feature>
<feature type="transmembrane region" description="Helical; Name=1" evidence="1">
    <location>
        <begin position="23"/>
        <end position="47"/>
    </location>
</feature>
<feature type="topological domain" description="Extracellular" evidence="1">
    <location>
        <begin position="48"/>
        <end position="123"/>
    </location>
</feature>
<feature type="transmembrane region" description="Helical; Name=2" evidence="1">
    <location>
        <begin position="124"/>
        <end position="142"/>
    </location>
</feature>
<feature type="topological domain" description="Cytoplasmic" evidence="1">
    <location>
        <begin position="143"/>
        <end position="264"/>
    </location>
</feature>
<feature type="transmembrane region" description="Helical; Name=3" evidence="1">
    <location>
        <begin position="265"/>
        <end position="286"/>
    </location>
</feature>
<feature type="topological domain" description="Extracellular" evidence="1">
    <location>
        <begin position="287"/>
        <end position="316"/>
    </location>
</feature>
<feature type="transmembrane region" description="Helical; Name=4" evidence="1">
    <location>
        <begin position="317"/>
        <end position="341"/>
    </location>
</feature>
<feature type="topological domain" description="Cytoplasmic" evidence="1">
    <location>
        <begin position="342"/>
        <end position="810"/>
    </location>
</feature>
<feature type="repeat" description="LRR 1" evidence="3">
    <location>
        <begin position="399"/>
        <end position="422"/>
    </location>
</feature>
<feature type="repeat" description="LRR 2" evidence="3">
    <location>
        <begin position="423"/>
        <end position="445"/>
    </location>
</feature>
<feature type="repeat" description="LRR 3" evidence="3">
    <location>
        <begin position="447"/>
        <end position="468"/>
    </location>
</feature>
<feature type="repeat" description="LRR 4" evidence="3">
    <location>
        <begin position="469"/>
        <end position="492"/>
    </location>
</feature>
<feature type="repeat" description="LRR 5" evidence="3">
    <location>
        <begin position="493"/>
        <end position="515"/>
    </location>
</feature>
<feature type="repeat" description="LRR 6" evidence="3">
    <location>
        <begin position="518"/>
        <end position="542"/>
    </location>
</feature>
<feature type="repeat" description="LRR 7" evidence="3">
    <location>
        <begin position="543"/>
        <end position="565"/>
    </location>
</feature>
<feature type="repeat" description="LRR 8" evidence="3">
    <location>
        <begin position="567"/>
        <end position="589"/>
    </location>
</feature>
<feature type="repeat" description="LRR 9" evidence="3">
    <location>
        <begin position="590"/>
        <end position="613"/>
    </location>
</feature>
<feature type="repeat" description="LRR 10" evidence="3">
    <location>
        <begin position="614"/>
        <end position="637"/>
    </location>
</feature>
<feature type="repeat" description="LRR 11" evidence="3">
    <location>
        <begin position="639"/>
        <end position="661"/>
    </location>
</feature>
<feature type="repeat" description="LRR 12" evidence="3">
    <location>
        <begin position="662"/>
        <end position="684"/>
    </location>
</feature>
<feature type="repeat" description="LRR 13" evidence="3">
    <location>
        <begin position="686"/>
        <end position="707"/>
    </location>
</feature>
<feature type="repeat" description="LRR 14" evidence="3">
    <location>
        <begin position="708"/>
        <end position="730"/>
    </location>
</feature>
<feature type="repeat" description="LRR 15" evidence="3">
    <location>
        <begin position="732"/>
        <end position="753"/>
    </location>
</feature>
<feature type="repeat" description="LRR 16" evidence="3">
    <location>
        <begin position="754"/>
        <end position="776"/>
    </location>
</feature>
<feature type="repeat" description="LRR 17" evidence="3">
    <location>
        <begin position="778"/>
        <end position="801"/>
    </location>
</feature>
<feature type="short sequence motif" description="Di-leucine motif" evidence="2">
    <location>
        <begin position="706"/>
        <end position="707"/>
    </location>
</feature>
<feature type="site" description="Required for anion selectivity" evidence="2">
    <location>
        <position position="103"/>
    </location>
</feature>
<feature type="modified residue" description="N-acetylmethionine" evidence="2">
    <location>
        <position position="1"/>
    </location>
</feature>
<feature type="modified residue" description="Phosphothreonine" evidence="1">
    <location>
        <position position="200"/>
    </location>
</feature>
<feature type="modified residue" description="Phosphoserine" evidence="9">
    <location>
        <position position="202"/>
    </location>
</feature>
<feature type="modified residue" description="Phosphothreonine" evidence="2">
    <location>
        <position position="215"/>
    </location>
</feature>
<feature type="modified residue" description="Phosphoserine" evidence="9">
    <location>
        <position position="217"/>
    </location>
</feature>
<feature type="glycosylation site" description="N-linked (GlcNAc...) asparagine" evidence="3">
    <location>
        <position position="66"/>
    </location>
</feature>
<feature type="glycosylation site" description="N-linked (GlcNAc...) asparagine" evidence="3">
    <location>
        <position position="83"/>
    </location>
</feature>
<feature type="disulfide bond" evidence="1">
    <location>
        <begin position="54"/>
        <end position="310"/>
    </location>
</feature>
<feature type="disulfide bond" evidence="1">
    <location>
        <begin position="57"/>
        <end position="65"/>
    </location>
</feature>
<feature type="disulfide bond" evidence="1">
    <location>
        <begin position="113"/>
        <end position="295"/>
    </location>
</feature>
<comment type="function">
    <text evidence="1 2 4">Essential component of the volume-regulated anion channel (VRAC, also named VSOAC channel), an anion channel required to maintain a constant cell volume in response to extracellular or intracellular osmotic changes (PubMed:28833202). The VRAC channel conducts iodide better than chloride and can also conduct organic osmolytes like taurine (PubMed:28833202). Mediates efflux of amino acids, such as aspartate and glutamate, in response to osmotic stress (By similarity). In complex with LRRC8C or LRRC8E, acts as a transporter of immunoreactive cyclic dinucleotide GMP-AMP (2'-3'-cGAMP), an immune messenger produced in response to DNA virus in the cytosol: mediates both import and export of 2'-3'-cGAMP, thereby promoting transfer of 2'-3'-cGAMP to bystander cells (By similarity). In contrast, complexes containing LRRC8D inhibit transport of 2'-3'-cGAMP (By similarity). Required for in vivo channel activity, together with at least one other family member (LRRC8B, LRRC8C, LRRC8D or LRRC8E); channel characteristics depend on the precise subunit composition (PubMed:28833202). Can form functional channels by itself (in vitro) (By similarity). Involved in B-cell development: required for the pro-B cell to pre-B cell transition (By similarity). Also required for T-cell development (By similarity). Required for myoblast differentiation: VRAC activity promotes membrane hyperpolarization and regulates insulin-stimulated glucose metabolism and oxygen consumption (By similarity). Also acts as a regulator of glucose-sensing in pancreatic beta cells: VRAC currents, generated in response to hypotonicity- or glucose-induced beta cell swelling, depolarize cells, thereby causing electrical excitation, leading to increase glucose sensitivity and insulin secretion (By similarity). Also plays a role in lysosome homeostasis by forming functional lysosomal VRAC channels in response to low cytoplasmic ionic strength condition: lysosomal VRAC channels are necessary for the formation of large lysosome-derived vacuoles, which store and then expel excess water to maintain cytosolic water homeostasis (By similarity). Acts as a key factor in NLRP3 inflammasome activation by modulating itaconate efflux and mitochondria function (By similarity).</text>
</comment>
<comment type="catalytic activity">
    <reaction evidence="2">
        <text>chloride(in) = chloride(out)</text>
        <dbReference type="Rhea" id="RHEA:29823"/>
        <dbReference type="ChEBI" id="CHEBI:17996"/>
    </reaction>
</comment>
<comment type="catalytic activity">
    <reaction evidence="2">
        <text>iodide(out) = iodide(in)</text>
        <dbReference type="Rhea" id="RHEA:66324"/>
        <dbReference type="ChEBI" id="CHEBI:16382"/>
    </reaction>
</comment>
<comment type="catalytic activity">
    <reaction evidence="4">
        <text>taurine(out) = taurine(in)</text>
        <dbReference type="Rhea" id="RHEA:66328"/>
        <dbReference type="ChEBI" id="CHEBI:507393"/>
    </reaction>
</comment>
<comment type="catalytic activity">
    <reaction evidence="7">
        <text>L-aspartate(out) = L-aspartate(in)</text>
        <dbReference type="Rhea" id="RHEA:66332"/>
        <dbReference type="ChEBI" id="CHEBI:29991"/>
    </reaction>
</comment>
<comment type="catalytic activity">
    <reaction evidence="2">
        <text>L-glutamate(out) = L-glutamate(in)</text>
        <dbReference type="Rhea" id="RHEA:66336"/>
        <dbReference type="ChEBI" id="CHEBI:29985"/>
    </reaction>
</comment>
<comment type="catalytic activity">
    <reaction evidence="4">
        <text>myo-inositol(out) = myo-inositol(in)</text>
        <dbReference type="Rhea" id="RHEA:32867"/>
        <dbReference type="ChEBI" id="CHEBI:17268"/>
    </reaction>
</comment>
<comment type="catalytic activity">
    <reaction evidence="2">
        <text>2',3'-cGAMP(out) = 2',3'-cGAMP(in)</text>
        <dbReference type="Rhea" id="RHEA:66320"/>
        <dbReference type="ChEBI" id="CHEBI:143093"/>
    </reaction>
    <physiologicalReaction direction="left-to-right" evidence="2">
        <dbReference type="Rhea" id="RHEA:66321"/>
    </physiologicalReaction>
    <physiologicalReaction direction="right-to-left" evidence="2">
        <dbReference type="Rhea" id="RHEA:66322"/>
    </physiologicalReaction>
</comment>
<comment type="activity regulation">
    <text evidence="1">Inhibited by (4-[(2-butyl-6,7-dichloro-2-cyclopentyl-2,3-dihydro-1-oxo-1H-inden-5-yl)oxy]butanoic acid), which plugs the channel like a cork in a bottle by binding in the extracellular selectivity filter and sterically occluding ion conduction (By similarity). Lipids may block conduction in closed heterohexameric channels (By similarity).</text>
</comment>
<comment type="subunit">
    <text evidence="1 2 4">Heterohexamer; oligomerizes with other LRRC8 proteins (LRRC8B, LRRC8C, LRRC8D and/or LRRC8E) to form a heterohexamer (By similarity). Can form homohexamers in vitro, but these have lower conductance than heterohexamers (By similarity). Detected in a channel complex that contains LRRC8A, LRRC8C and LRRC8E (By similarity). In vivo, the subunit composition may depend primarily on expression levels, and heterooligomeric channels containing various proportions of the different LRRC8 proteins may coexist (PubMed:28833202). Interact with GRB2 (By similarity). Interacts with NOX4; this interaction prevents the ubiquitin-mediated degradation of LRRC8A (By similarity).</text>
</comment>
<comment type="subcellular location">
    <subcellularLocation>
        <location evidence="7">Cell membrane</location>
        <topology evidence="2">Multi-pass membrane protein</topology>
    </subcellularLocation>
    <subcellularLocation>
        <location evidence="2">Lysosome membrane</location>
        <topology evidence="2">Multi-pass membrane protein</topology>
    </subcellularLocation>
    <text evidence="2">Mainly localizes to the cell membrane, with some intracellular localization to lysosomes.</text>
</comment>
<comment type="domain">
    <text evidence="2">The volume-regulated anion channel (VRAC) channel forms a trimer of dimers, with symmetry mismatch between the pore-forming domain and the cytosolic LRR repeats, a topology similar to gap junction proteins.</text>
</comment>
<comment type="domain">
    <text evidence="2">The di-leucine motif is required for lysosomal localization.</text>
</comment>
<comment type="domain">
    <text evidence="2">The cytoplasmic N-terminus preceding the first transmembrane (residues 1-22) regulates volume-regulated anion channel (VRAC) conductance, ion permeability and inactivation gating.</text>
</comment>
<comment type="PTM">
    <text evidence="2">N-glycosylated.</text>
</comment>
<comment type="similarity">
    <text evidence="6">Belongs to the LRRC8 family.</text>
</comment>
<sequence length="810" mass="94162">MIPVTELRYFADTQPAYRILKPWWDVFTDYISIVMLMIAVFGGTLQVTQDKMICLPCKWVTKDSCNDSFRGWGASSPEPTYPNSTVLPTPDTGPTGIKYDLDRHQYNYVDAVCYENRLHWFAKYFPYLVLLHTLIFLACSNFWFKFPRTSSKLEHFVSILLKCFDSPWTTRALSETVVEESDPKPAFSKMNGSMDKKSSTVSEDVEATVPMLQRTKSRIEQGIVDRSETGVLDKKEGEQAKALFEKVKKFRTHVEEGDIVYRLYMRQTIIKVIKFFLIICYTVYYVHNIKFDVDCTVDIESLTGYRTYRCAHPLATLFKILASFYISLVIFYGLICMYTLWWMLRRSLKKYSFESIREESSYSDIPDVKNDFAFMLHLIDQYDPLYSKRFAVFLSEVSENKLRQLNLNNEWTLDKLRQRLTKNAQDKLELHLFMLSGIPDTVFDLLELEVLKLELIPDVTIPPSIAQLTGLKELWLYHTAAKIEAPALAFLRENLRALHIKFTDIKEIPLWIYSLKTLEELHLTGNLSAENNRYIVIDGLRELKRLKVLRLKSNLSKLPQVVTDVGVHLQKLSINNEGTKLIVLNSLKKMVNLTELELIRCDLERIPHSIFSLHNLQEIDLKDNNLKTIEEIISFQHLHRLTCLKLWYNHIAYIPIQIGNLTNLERLYLNRNKIEKIPTQLFYCRKLRYLDLSHNNLTLLPADIGLLQNLQNLAVTANRIEALPPELFQCRKLRALHLGNNVLQSLPSRVGELTNLTQIELRGNRLECLPVELGECPLLKRSGLVVEEDLFSTLPPEVKERLWRADKEQA</sequence>
<evidence type="ECO:0000250" key="1">
    <source>
        <dbReference type="UniProtKB" id="Q80WG5"/>
    </source>
</evidence>
<evidence type="ECO:0000250" key="2">
    <source>
        <dbReference type="UniProtKB" id="Q8IWT6"/>
    </source>
</evidence>
<evidence type="ECO:0000255" key="3"/>
<evidence type="ECO:0000269" key="4">
    <source>
    </source>
</evidence>
<evidence type="ECO:0000303" key="5">
    <source>
    </source>
</evidence>
<evidence type="ECO:0000305" key="6"/>
<evidence type="ECO:0000305" key="7">
    <source>
    </source>
</evidence>
<evidence type="ECO:0000312" key="8">
    <source>
        <dbReference type="RGD" id="1311690"/>
    </source>
</evidence>
<evidence type="ECO:0007744" key="9">
    <source>
    </source>
</evidence>
<reference key="1">
    <citation type="journal article" date="2004" name="Genome Res.">
        <title>The status, quality, and expansion of the NIH full-length cDNA project: the Mammalian Gene Collection (MGC).</title>
        <authorList>
            <consortium name="The MGC Project Team"/>
        </authorList>
    </citation>
    <scope>NUCLEOTIDE SEQUENCE [LARGE SCALE MRNA]</scope>
    <source>
        <tissue>Placenta</tissue>
    </source>
</reference>
<reference key="2">
    <citation type="journal article" date="2012" name="Nat. Commun.">
        <title>Quantitative maps of protein phosphorylation sites across 14 different rat organs and tissues.</title>
        <authorList>
            <person name="Lundby A."/>
            <person name="Secher A."/>
            <person name="Lage K."/>
            <person name="Nordsborg N.B."/>
            <person name="Dmytriyev A."/>
            <person name="Lundby C."/>
            <person name="Olsen J.V."/>
        </authorList>
    </citation>
    <scope>PHOSPHORYLATION [LARGE SCALE ANALYSIS] AT SER-202 AND SER-217</scope>
    <scope>IDENTIFICATION BY MASS SPECTROMETRY [LARGE SCALE ANALYSIS]</scope>
</reference>
<reference key="3">
    <citation type="journal article" date="2017" name="J. Physiol. (Lond.)">
        <title>Molecular composition and heterogeneity of the LRRC8-containing swelling-activated osmolyte channels in primary rat astrocytes.</title>
        <authorList>
            <person name="Schober A.L."/>
            <person name="Wilson C.S."/>
            <person name="Mongin A.A."/>
        </authorList>
    </citation>
    <scope>FUNCTION</scope>
    <scope>TRANSPORTER ACTIVITY</scope>
    <scope>SUBCELLULAR LOCATION</scope>
    <scope>SUBUNIT</scope>
</reference>
<gene>
    <name evidence="5 8" type="primary">Lrrc8a</name>
    <name evidence="5" type="synonym">Lrrc8</name>
    <name evidence="2" type="synonym">SWELL1</name>
</gene>
<protein>
    <recommendedName>
        <fullName evidence="2">Volume-regulated anion channel subunit LRRC8A</fullName>
    </recommendedName>
    <alternativeName>
        <fullName evidence="5">Leucine-rich repeat-containing protein 8A</fullName>
    </alternativeName>
    <alternativeName>
        <fullName evidence="2">Swelling protein 1 SWELL1</fullName>
    </alternativeName>
</protein>
<accession>Q4V8I7</accession>
<name>LRC8A_RAT</name>
<keyword id="KW-0007">Acetylation</keyword>
<keyword id="KW-1003">Cell membrane</keyword>
<keyword id="KW-0221">Differentiation</keyword>
<keyword id="KW-1015">Disulfide bond</keyword>
<keyword id="KW-0325">Glycoprotein</keyword>
<keyword id="KW-0407">Ion channel</keyword>
<keyword id="KW-0406">Ion transport</keyword>
<keyword id="KW-0433">Leucine-rich repeat</keyword>
<keyword id="KW-0458">Lysosome</keyword>
<keyword id="KW-0472">Membrane</keyword>
<keyword id="KW-0597">Phosphoprotein</keyword>
<keyword id="KW-1185">Reference proteome</keyword>
<keyword id="KW-0677">Repeat</keyword>
<keyword id="KW-0744">Spermatogenesis</keyword>
<keyword id="KW-0812">Transmembrane</keyword>
<keyword id="KW-1133">Transmembrane helix</keyword>
<keyword id="KW-0813">Transport</keyword>
<organism>
    <name type="scientific">Rattus norvegicus</name>
    <name type="common">Rat</name>
    <dbReference type="NCBI Taxonomy" id="10116"/>
    <lineage>
        <taxon>Eukaryota</taxon>
        <taxon>Metazoa</taxon>
        <taxon>Chordata</taxon>
        <taxon>Craniata</taxon>
        <taxon>Vertebrata</taxon>
        <taxon>Euteleostomi</taxon>
        <taxon>Mammalia</taxon>
        <taxon>Eutheria</taxon>
        <taxon>Euarchontoglires</taxon>
        <taxon>Glires</taxon>
        <taxon>Rodentia</taxon>
        <taxon>Myomorpha</taxon>
        <taxon>Muroidea</taxon>
        <taxon>Muridae</taxon>
        <taxon>Murinae</taxon>
        <taxon>Rattus</taxon>
    </lineage>
</organism>